<name>ACEA1_MYCTO</name>
<gene>
    <name type="primary">icl1</name>
    <name type="ordered locus">MT0483</name>
</gene>
<sequence>MSVVGTPKSAEQIQQEWDTNPRWKDVTRTYSAEDVVALQGSVVEEHTLARRGAEVLWEQLHDLEWVNALGALTGNMAVQQVRAGLKAIYLSGWQVAGDANLSGHTYPDQSLYPANSVPQVVRRINNALQRADQIAKIEGDTSVENWLAPIVADGEAGFGGALNVYELQKALIAAGVAGSHWEDQLASEKKCGHLGGKVLIPTQQHIRTLTSARLAADVADVPTVVIARTDAEAATLITSDVDERDQPFITGERTREGFYRTKNGIEPCIARAKAYAPFADLIWMETGTPDLEAARQFSEAVKAEYPDQMLAYNCSPSFNWKKHLDDATIAKFQKELAAMGFKFQFITLAGFHALNYSMFDLAYGYAQNQMSAYVELQEREFAAEERGYTATKHQREVGAGYFDRIATTVDPNSSTTALTGSTEEGQFH</sequence>
<accession>P9WKK6</accession>
<accession>L0T3N9</accession>
<accession>O53752</accession>
<accession>P0A5H3</accession>
<evidence type="ECO:0000250" key="1">
    <source>
        <dbReference type="UniProtKB" id="P9WKK7"/>
    </source>
</evidence>
<evidence type="ECO:0000269" key="2">
    <source>
    </source>
</evidence>
<evidence type="ECO:0000269" key="3">
    <source>
    </source>
</evidence>
<evidence type="ECO:0000269" key="4">
    <source>
    </source>
</evidence>
<evidence type="ECO:0000303" key="5">
    <source>
    </source>
</evidence>
<evidence type="ECO:0000303" key="6">
    <source>
    </source>
</evidence>
<evidence type="ECO:0000305" key="7"/>
<evidence type="ECO:0000305" key="8">
    <source>
    </source>
</evidence>
<keyword id="KW-0329">Glyoxylate bypass</keyword>
<keyword id="KW-0456">Lyase</keyword>
<keyword id="KW-0460">Magnesium</keyword>
<keyword id="KW-0464">Manganese</keyword>
<keyword id="KW-0479">Metal-binding</keyword>
<keyword id="KW-1185">Reference proteome</keyword>
<keyword id="KW-0816">Tricarboxylic acid cycle</keyword>
<comment type="function">
    <text evidence="2 3 4">Involved in the persistence and virulence of M.tuberculosis. Catalyzes the reversible formation of succinate and glyoxylate from isocitrate, a key step of the glyoxylate cycle, which operates as an anaplerotic route for replenishing the tricarboxylic acid cycle during growth on fatty acid substrates. It also catalyzes the formation of pyruvate and succinate from 2-methylisocitrate, a key step in the methylcitrate cycle (propionate degradation route).</text>
</comment>
<comment type="catalytic activity">
    <reaction evidence="2 4">
        <text>D-threo-isocitrate = glyoxylate + succinate</text>
        <dbReference type="Rhea" id="RHEA:13245"/>
        <dbReference type="ChEBI" id="CHEBI:15562"/>
        <dbReference type="ChEBI" id="CHEBI:30031"/>
        <dbReference type="ChEBI" id="CHEBI:36655"/>
        <dbReference type="EC" id="4.1.3.1"/>
    </reaction>
</comment>
<comment type="catalytic activity">
    <reaction evidence="4">
        <text>(2S,3R)-3-hydroxybutane-1,2,3-tricarboxylate = pyruvate + succinate</text>
        <dbReference type="Rhea" id="RHEA:16809"/>
        <dbReference type="ChEBI" id="CHEBI:15361"/>
        <dbReference type="ChEBI" id="CHEBI:30031"/>
        <dbReference type="ChEBI" id="CHEBI:57429"/>
        <dbReference type="EC" id="4.1.3.30"/>
    </reaction>
</comment>
<comment type="cofactor">
    <cofactor evidence="2">
        <name>Mg(2+)</name>
        <dbReference type="ChEBI" id="CHEBI:18420"/>
    </cofactor>
    <text evidence="2">Can also use Mn(2+) ion.</text>
</comment>
<comment type="activity regulation">
    <text evidence="2 3">Inhibited by itaconate, itaconic anhydride, bromopyruvate and 3-nitropropionate (3-NP), when M.tuberculosis grows on fatty acids, but not on glucose. At 5 mM, oxalate and malate also inhibit the activity to approximately 50%.</text>
</comment>
<comment type="biophysicochemical properties">
    <kinetics>
        <KM evidence="2">145 uM for threo-D-isocitrate (at pH 6.8 and 37 degrees Celsius)</KM>
        <KM evidence="4">188 uM for threo-DL-isocitrate (ICA) (at pH 6.8)</KM>
        <KM evidence="4">718 uM for DL-threo-2-methylisocitrate (MICA) (at pH 7.5)</KM>
        <Vmax evidence="2">1.3 umol/min/mg enzyme with threo-D-isocitrate as substrate (at pH 6.8 and 37 degrees Celsius)</Vmax>
        <text evidence="4">kcat is 5.24 sec(-1) for isocitrate lyase activity with threo-DL-isocitrate as substrate (at pH 6). kcat is 1.25 sec(-1) for methylisocitrate lyase activity with DL-threo-2-methylisocitrate as substrate (at pH 7.5).</text>
    </kinetics>
    <phDependence>
        <text evidence="2">Optimum pH is 6.8.</text>
    </phDependence>
</comment>
<comment type="pathway">
    <text evidence="8">Carbohydrate metabolism; glyoxylate cycle; (S)-malate from isocitrate: step 1/2.</text>
</comment>
<comment type="subunit">
    <text evidence="1">Homotetramer.</text>
</comment>
<comment type="induction">
    <text evidence="2">Induced by palmitate and acetate. Repressed by glucose and succinate.</text>
</comment>
<comment type="disruption phenotype">
    <text evidence="3">Deletion of icl1 has little effect on replication in media containing glycerol, glucose, short-chain fatty acids or long-chain fatty acids. Deletion of icl1 results in a modest reduction of the bacterial load in the lungs during the chronic phase but not the acute phase of infection, and reduces tissue pathology. Deletion of both icl1 and icl2 eliminates growth on fatty acids but has little effect on use of carbohydrates. Cells lacking both genes are incapable of growth in mice and are rapidly eliminated from the lungs and spleen.</text>
</comment>
<comment type="similarity">
    <text evidence="7">Belongs to the isocitrate lyase/PEP mutase superfamily. Isocitrate lyase family.</text>
</comment>
<dbReference type="EC" id="4.1.3.1" evidence="2 4"/>
<dbReference type="EC" id="4.1.3.30" evidence="4"/>
<dbReference type="EMBL" id="AE000516">
    <property type="protein sequence ID" value="AAK44707.1"/>
    <property type="molecule type" value="Genomic_DNA"/>
</dbReference>
<dbReference type="PIR" id="G70828">
    <property type="entry name" value="G70828"/>
</dbReference>
<dbReference type="SMR" id="P9WKK6"/>
<dbReference type="ChEMBL" id="CHEMBL4295587"/>
<dbReference type="ABCD" id="P9WKK6">
    <property type="antibodies" value="1 sequenced antibody"/>
</dbReference>
<dbReference type="KEGG" id="mtc:MT0483"/>
<dbReference type="PATRIC" id="fig|83331.31.peg.513"/>
<dbReference type="HOGENOM" id="CLU_019214_2_0_11"/>
<dbReference type="UniPathway" id="UPA00703">
    <property type="reaction ID" value="UER00719"/>
</dbReference>
<dbReference type="Proteomes" id="UP000001020">
    <property type="component" value="Chromosome"/>
</dbReference>
<dbReference type="GO" id="GO:0004451">
    <property type="term" value="F:isocitrate lyase activity"/>
    <property type="evidence" value="ECO:0007669"/>
    <property type="project" value="UniProtKB-EC"/>
</dbReference>
<dbReference type="GO" id="GO:0046872">
    <property type="term" value="F:metal ion binding"/>
    <property type="evidence" value="ECO:0007669"/>
    <property type="project" value="UniProtKB-KW"/>
</dbReference>
<dbReference type="GO" id="GO:0046421">
    <property type="term" value="F:methylisocitrate lyase activity"/>
    <property type="evidence" value="ECO:0007669"/>
    <property type="project" value="UniProtKB-EC"/>
</dbReference>
<dbReference type="GO" id="GO:0006097">
    <property type="term" value="P:glyoxylate cycle"/>
    <property type="evidence" value="ECO:0007669"/>
    <property type="project" value="UniProtKB-UniPathway"/>
</dbReference>
<dbReference type="GO" id="GO:0006099">
    <property type="term" value="P:tricarboxylic acid cycle"/>
    <property type="evidence" value="ECO:0007669"/>
    <property type="project" value="UniProtKB-KW"/>
</dbReference>
<dbReference type="CDD" id="cd06556">
    <property type="entry name" value="ICL_KPHMT"/>
    <property type="match status" value="1"/>
</dbReference>
<dbReference type="FunFam" id="3.20.20.60:FF:000005">
    <property type="entry name" value="Isocitrate lyase"/>
    <property type="match status" value="1"/>
</dbReference>
<dbReference type="Gene3D" id="3.20.20.60">
    <property type="entry name" value="Phosphoenolpyruvate-binding domains"/>
    <property type="match status" value="1"/>
</dbReference>
<dbReference type="InterPro" id="IPR006254">
    <property type="entry name" value="Isocitrate_lyase"/>
</dbReference>
<dbReference type="InterPro" id="IPR018523">
    <property type="entry name" value="Isocitrate_lyase_ph_CS"/>
</dbReference>
<dbReference type="InterPro" id="IPR015813">
    <property type="entry name" value="Pyrv/PenolPyrv_kinase-like_dom"/>
</dbReference>
<dbReference type="InterPro" id="IPR040442">
    <property type="entry name" value="Pyrv_kinase-like_dom_sf"/>
</dbReference>
<dbReference type="NCBIfam" id="TIGR01346">
    <property type="entry name" value="isocit_lyase"/>
    <property type="match status" value="2"/>
</dbReference>
<dbReference type="NCBIfam" id="NF011645">
    <property type="entry name" value="PRK15063.1"/>
    <property type="match status" value="1"/>
</dbReference>
<dbReference type="PANTHER" id="PTHR21631:SF3">
    <property type="entry name" value="BIFUNCTIONAL GLYOXYLATE CYCLE PROTEIN"/>
    <property type="match status" value="1"/>
</dbReference>
<dbReference type="PANTHER" id="PTHR21631">
    <property type="entry name" value="ISOCITRATE LYASE/MALATE SYNTHASE"/>
    <property type="match status" value="1"/>
</dbReference>
<dbReference type="Pfam" id="PF00463">
    <property type="entry name" value="ICL"/>
    <property type="match status" value="2"/>
</dbReference>
<dbReference type="PIRSF" id="PIRSF001362">
    <property type="entry name" value="Isocit_lyase"/>
    <property type="match status" value="1"/>
</dbReference>
<dbReference type="SUPFAM" id="SSF51621">
    <property type="entry name" value="Phosphoenolpyruvate/pyruvate domain"/>
    <property type="match status" value="1"/>
</dbReference>
<dbReference type="PROSITE" id="PS00161">
    <property type="entry name" value="ISOCITRATE_LYASE"/>
    <property type="match status" value="1"/>
</dbReference>
<organism>
    <name type="scientific">Mycobacterium tuberculosis (strain CDC 1551 / Oshkosh)</name>
    <dbReference type="NCBI Taxonomy" id="83331"/>
    <lineage>
        <taxon>Bacteria</taxon>
        <taxon>Bacillati</taxon>
        <taxon>Actinomycetota</taxon>
        <taxon>Actinomycetes</taxon>
        <taxon>Mycobacteriales</taxon>
        <taxon>Mycobacteriaceae</taxon>
        <taxon>Mycobacterium</taxon>
        <taxon>Mycobacterium tuberculosis complex</taxon>
    </lineage>
</organism>
<protein>
    <recommendedName>
        <fullName evidence="5">Isocitrate lyase 1</fullName>
        <shortName evidence="5">ICL1</shortName>
        <ecNumber evidence="2 4">4.1.3.1</ecNumber>
    </recommendedName>
    <alternativeName>
        <fullName evidence="5">Isocitrase</fullName>
    </alternativeName>
    <alternativeName>
        <fullName evidence="5">Isocitratase</fullName>
    </alternativeName>
    <alternativeName>
        <fullName evidence="6">Methylisocitrate lyase</fullName>
        <shortName evidence="6">MICA</shortName>
        <ecNumber evidence="4">4.1.3.30</ecNumber>
    </alternativeName>
</protein>
<reference key="1">
    <citation type="journal article" date="2002" name="J. Bacteriol.">
        <title>Whole-genome comparison of Mycobacterium tuberculosis clinical and laboratory strains.</title>
        <authorList>
            <person name="Fleischmann R.D."/>
            <person name="Alland D."/>
            <person name="Eisen J.A."/>
            <person name="Carpenter L."/>
            <person name="White O."/>
            <person name="Peterson J.D."/>
            <person name="DeBoy R.T."/>
            <person name="Dodson R.J."/>
            <person name="Gwinn M.L."/>
            <person name="Haft D.H."/>
            <person name="Hickey E.K."/>
            <person name="Kolonay J.F."/>
            <person name="Nelson W.C."/>
            <person name="Umayam L.A."/>
            <person name="Ermolaeva M.D."/>
            <person name="Salzberg S.L."/>
            <person name="Delcher A."/>
            <person name="Utterback T.R."/>
            <person name="Weidman J.F."/>
            <person name="Khouri H.M."/>
            <person name="Gill J."/>
            <person name="Mikula A."/>
            <person name="Bishai W."/>
            <person name="Jacobs W.R. Jr."/>
            <person name="Venter J.C."/>
            <person name="Fraser C.M."/>
        </authorList>
    </citation>
    <scope>NUCLEOTIDE SEQUENCE [LARGE SCALE GENOMIC DNA]</scope>
    <source>
        <strain>CDC 1551 / Oshkosh</strain>
    </source>
</reference>
<reference key="2">
    <citation type="journal article" date="1999" name="J. Bacteriol.">
        <title>Characterization of activity and expression of isocitrate lyase in Mycobacterium avium and Mycobacterium tuberculosis.</title>
        <authorList>
            <person name="Honer Zu Bentrup K."/>
            <person name="Miczak A."/>
            <person name="Swenson D.L."/>
            <person name="Russell D.G."/>
        </authorList>
    </citation>
    <scope>FUNCTION</scope>
    <scope>CATALYTIC ACTIVITY</scope>
    <scope>BIOPHYSICOCHEMICAL PROPERTIES</scope>
    <scope>ACTIVITY REGULATION</scope>
    <scope>INDUCTION</scope>
    <scope>COFACTOR</scope>
    <source>
        <strain>CDC 1551 / Oshkosh</strain>
    </source>
</reference>
<reference key="3">
    <citation type="journal article" date="2005" name="Nat. Med.">
        <title>Mycobacterium tuberculosis isocitrate lyases 1 and 2 are jointly required for in vivo growth and virulence.</title>
        <authorList>
            <person name="Munoz-Elias E.J."/>
            <person name="McKinney J.D."/>
        </authorList>
    </citation>
    <scope>FUNCTION</scope>
    <scope>DISRUPTION PHENOTYPE</scope>
    <scope>ACTIVITY REGULATION</scope>
</reference>
<reference key="4">
    <citation type="journal article" date="2006" name="Mol. Microbiol.">
        <title>Dual role of isocitrate lyase 1 in the glyoxylate and methylcitrate cycles in Mycobacterium tuberculosis.</title>
        <authorList>
            <person name="Gould T.A."/>
            <person name="van de Langemheen H."/>
            <person name="Munoz-Elias E.J."/>
            <person name="McKinney J.D."/>
            <person name="Sacchettini J.C."/>
        </authorList>
    </citation>
    <scope>FUNCTION</scope>
    <scope>CATALYTIC ACTIVITY</scope>
    <scope>BIOPHYSICOCHEMICAL PROPERTIES</scope>
</reference>
<proteinExistence type="evidence at protein level"/>
<feature type="chain" id="PRO_0000427637" description="Isocitrate lyase 1">
    <location>
        <begin position="1"/>
        <end position="428"/>
    </location>
</feature>
<feature type="active site" description="Proton acceptor" evidence="1">
    <location>
        <position position="191"/>
    </location>
</feature>
<feature type="binding site" evidence="1">
    <location>
        <begin position="91"/>
        <end position="93"/>
    </location>
    <ligand>
        <name>substrate</name>
    </ligand>
</feature>
<feature type="binding site" evidence="1">
    <location>
        <position position="153"/>
    </location>
    <ligand>
        <name>Mg(2+)</name>
        <dbReference type="ChEBI" id="CHEBI:18420"/>
    </ligand>
</feature>
<feature type="binding site" evidence="1">
    <location>
        <begin position="192"/>
        <end position="193"/>
    </location>
    <ligand>
        <name>substrate</name>
    </ligand>
</feature>
<feature type="binding site" evidence="1">
    <location>
        <position position="228"/>
    </location>
    <ligand>
        <name>substrate</name>
    </ligand>
</feature>
<feature type="binding site" evidence="1">
    <location>
        <begin position="313"/>
        <end position="317"/>
    </location>
    <ligand>
        <name>substrate</name>
    </ligand>
</feature>
<feature type="binding site" evidence="1">
    <location>
        <position position="347"/>
    </location>
    <ligand>
        <name>substrate</name>
    </ligand>
</feature>